<accession>Q7YT37</accession>
<accession>Q86M95</accession>
<comment type="function">
    <text evidence="5 6 7 8 9">Modulates blood feeding of female mosquitoes on vertebrate hosts (PubMed:21986215, PubMed:30816309). Inhibits collagen-induced platelet aggregation in the host via preventing collagen interaction with its ligands: glycoprotein VI and integrin alpha-2/beta-1 (ITGA2/ITGB1) (PubMed:18056842, PubMed:21986215, PubMed:22738392). Inhibits collagen-induced increase of Ca(2+) levels in host platelets (PubMed:18056842). Binds to host collagens (PubMed:18056842, PubMed:22738392, PubMed:24764297, PubMed:30816309). Binds Ca(2+) (PubMed:30816309). Prevents a decrease in platelet count in the host blood after collagen injection (PubMed:21986215).</text>
</comment>
<comment type="function">
    <text evidence="9">(Microbial infection) Does not affect the development of Plasmodium berghei parasites in mosquitoes.</text>
</comment>
<comment type="subcellular location">
    <subcellularLocation>
        <location evidence="9">Secreted</location>
    </subcellularLocation>
</comment>
<comment type="tissue specificity">
    <text evidence="4 5 9">Female saliva (at protein level) (PubMed:30816309). Distal lateral lobes of female salivary gland (at protein level) (PubMed:16907827, PubMed:18056842, PubMed:30816309). Low-level expression in male salivary gland (PubMed:16907827, PubMed:18056842). Not detected in female and male carcasses (PubMed:16907827, PubMed:18056842).</text>
</comment>
<comment type="induction">
    <text evidence="4">Induced by blood feeding.</text>
</comment>
<comment type="miscellaneous">
    <text evidence="6">Protects mice from collagen-induced thrombus formation in a murine model of lethal pulmonary thromboembolism.</text>
</comment>
<comment type="similarity">
    <text evidence="16">Belongs to the aegyptin family.</text>
</comment>
<protein>
    <recommendedName>
        <fullName evidence="1">Aegyptin-like protein</fullName>
    </recommendedName>
    <alternativeName>
        <fullName evidence="12 13">Anopheline anti-platelet protein</fullName>
        <shortName evidence="11 12 13 14 15">AAPP</shortName>
    </alternativeName>
    <alternativeName>
        <fullName evidence="19">Anti-platelet aggregation protein</fullName>
    </alternativeName>
    <alternativeName>
        <fullName evidence="18">GE-rich salivary gland protein</fullName>
    </alternativeName>
</protein>
<gene>
    <name evidence="10 14" type="primary">AAPP</name>
    <name evidence="18" type="synonym">ansg-1</name>
</gene>
<name>ALL3_ANOST</name>
<keyword id="KW-0002">3D-structure</keyword>
<keyword id="KW-0106">Calcium</keyword>
<keyword id="KW-1015">Disulfide bond</keyword>
<keyword id="KW-1199">Hemostasis impairing toxin</keyword>
<keyword id="KW-0389">IgE-binding protein</keyword>
<keyword id="KW-1201">Platelet aggregation inhibiting toxin</keyword>
<keyword id="KW-1185">Reference proteome</keyword>
<keyword id="KW-0964">Secreted</keyword>
<keyword id="KW-0732">Signal</keyword>
<keyword id="KW-0800">Toxin</keyword>
<sequence>MKLLLLLASVLCLALIVSARPSDETTDQESSTELSEDTSDSYHQEEDTSETGADAGTEDGNSEDDSSELESSSEEGHEDGSEDATGEEGGAGEKGEAGEEDEAGEEGEAGEEGEAGEEGGAGEEGGAGEEGGADEEGSAGEEGGAEGGEESPVNTYHQVHNLLKNIMNVGTKNNYLKSFILARLQERLMNPTIDLVGSISKYSKIKECFDSLADDVKSLVEKSETSYEECSKDKNNPHCGSEGTRELDEGLIEREQKLSDCIVEKRDSE</sequence>
<feature type="signal peptide" evidence="2">
    <location>
        <begin position="1"/>
        <end position="19"/>
    </location>
</feature>
<feature type="chain" id="PRO_5007711648" description="Aegyptin-like protein" evidence="2">
    <location>
        <begin position="20"/>
        <end position="269"/>
    </location>
</feature>
<feature type="region of interest" description="Disordered" evidence="3">
    <location>
        <begin position="19"/>
        <end position="152"/>
    </location>
</feature>
<feature type="region of interest" description="GE-rich region which mediates binding of Ca(2+)" evidence="9">
    <location>
        <begin position="38"/>
        <end position="148"/>
    </location>
</feature>
<feature type="region of interest" description="Mediates binding of host collagen and inhibition of platelet aggregation" evidence="7">
    <location>
        <begin position="148"/>
        <end position="269"/>
    </location>
</feature>
<feature type="compositionally biased region" description="Acidic residues" evidence="3">
    <location>
        <begin position="56"/>
        <end position="73"/>
    </location>
</feature>
<feature type="compositionally biased region" description="Acidic residues" evidence="3">
    <location>
        <begin position="98"/>
        <end position="121"/>
    </location>
</feature>
<feature type="compositionally biased region" description="Acidic residues" evidence="3">
    <location>
        <begin position="131"/>
        <end position="149"/>
    </location>
</feature>
<feature type="disulfide bond" evidence="8 20">
    <location>
        <begin position="208"/>
        <end position="261"/>
    </location>
</feature>
<feature type="disulfide bond" evidence="8 20">
    <location>
        <begin position="230"/>
        <end position="239"/>
    </location>
</feature>
<feature type="mutagenesis site" description="Does not affect collagen binding." evidence="8">
    <original>KDKN</original>
    <variation>AAAA</variation>
    <location>
        <begin position="232"/>
        <end position="235"/>
    </location>
</feature>
<feature type="mutagenesis site" description="Reduces collagen binding. Abolishes collagen binding; when associated with A-261." evidence="8">
    <original>C</original>
    <variation>A</variation>
    <location>
        <position position="239"/>
    </location>
</feature>
<feature type="mutagenesis site" description="Abolishes collagen binding; when associated with A-239." evidence="8">
    <original>C</original>
    <variation>A</variation>
    <location>
        <position position="261"/>
    </location>
</feature>
<feature type="sequence conflict" description="In Ref. 1; AAO74840." evidence="16" ref="1">
    <original>K</original>
    <variation>E</variation>
    <location>
        <position position="234"/>
    </location>
</feature>
<feature type="sequence conflict" description="In Ref. 1; AAO74840." evidence="16" ref="1">
    <original>C</original>
    <variation>G</variation>
    <location>
        <position position="261"/>
    </location>
</feature>
<feature type="helix" evidence="21">
    <location>
        <begin position="206"/>
        <end position="209"/>
    </location>
</feature>
<feature type="helix" evidence="21">
    <location>
        <begin position="212"/>
        <end position="231"/>
    </location>
</feature>
<feature type="helix" evidence="21">
    <location>
        <begin position="239"/>
        <end position="264"/>
    </location>
</feature>
<organism evidence="18">
    <name type="scientific">Anopheles stephensi</name>
    <name type="common">Indo-Pakistan malaria mosquito</name>
    <dbReference type="NCBI Taxonomy" id="30069"/>
    <lineage>
        <taxon>Eukaryota</taxon>
        <taxon>Metazoa</taxon>
        <taxon>Ecdysozoa</taxon>
        <taxon>Arthropoda</taxon>
        <taxon>Hexapoda</taxon>
        <taxon>Insecta</taxon>
        <taxon>Pterygota</taxon>
        <taxon>Neoptera</taxon>
        <taxon>Endopterygota</taxon>
        <taxon>Diptera</taxon>
        <taxon>Nematocera</taxon>
        <taxon>Culicoidea</taxon>
        <taxon>Culicidae</taxon>
        <taxon>Anophelinae</taxon>
        <taxon>Anopheles</taxon>
    </lineage>
</organism>
<evidence type="ECO:0000250" key="1">
    <source>
        <dbReference type="UniProtKB" id="Q5MIT9"/>
    </source>
</evidence>
<evidence type="ECO:0000255" key="2"/>
<evidence type="ECO:0000256" key="3">
    <source>
        <dbReference type="SAM" id="MobiDB-lite"/>
    </source>
</evidence>
<evidence type="ECO:0000269" key="4">
    <source>
    </source>
</evidence>
<evidence type="ECO:0000269" key="5">
    <source>
    </source>
</evidence>
<evidence type="ECO:0000269" key="6">
    <source>
    </source>
</evidence>
<evidence type="ECO:0000269" key="7">
    <source>
    </source>
</evidence>
<evidence type="ECO:0000269" key="8">
    <source>
    </source>
</evidence>
<evidence type="ECO:0000269" key="9">
    <source>
    </source>
</evidence>
<evidence type="ECO:0000303" key="10">
    <source>
    </source>
</evidence>
<evidence type="ECO:0000303" key="11">
    <source>
    </source>
</evidence>
<evidence type="ECO:0000303" key="12">
    <source>
    </source>
</evidence>
<evidence type="ECO:0000303" key="13">
    <source>
    </source>
</evidence>
<evidence type="ECO:0000303" key="14">
    <source>
    </source>
</evidence>
<evidence type="ECO:0000303" key="15">
    <source>
    </source>
</evidence>
<evidence type="ECO:0000305" key="16"/>
<evidence type="ECO:0000312" key="17">
    <source>
        <dbReference type="EMBL" id="AAO74840.1"/>
    </source>
</evidence>
<evidence type="ECO:0000312" key="18">
    <source>
        <dbReference type="EMBL" id="BAC78821.2"/>
    </source>
</evidence>
<evidence type="ECO:0000312" key="19">
    <source>
        <dbReference type="EMBL" id="BAE53440.1"/>
    </source>
</evidence>
<evidence type="ECO:0007744" key="20">
    <source>
        <dbReference type="PDB" id="4OKV"/>
    </source>
</evidence>
<evidence type="ECO:0007829" key="21">
    <source>
        <dbReference type="PDB" id="4OKV"/>
    </source>
</evidence>
<proteinExistence type="evidence at protein level"/>
<dbReference type="EMBL" id="AY226454">
    <property type="protein sequence ID" value="AAO74840.1"/>
    <property type="molecule type" value="mRNA"/>
</dbReference>
<dbReference type="EMBL" id="AB113667">
    <property type="protein sequence ID" value="BAC78821.2"/>
    <property type="molecule type" value="mRNA"/>
</dbReference>
<dbReference type="EMBL" id="AB212871">
    <property type="protein sequence ID" value="BAE53440.1"/>
    <property type="molecule type" value="Genomic_DNA"/>
</dbReference>
<dbReference type="PDB" id="4OKV">
    <property type="method" value="X-ray"/>
    <property type="resolution" value="1.80 A"/>
    <property type="chains" value="E/F=201-266"/>
</dbReference>
<dbReference type="PDBsum" id="4OKV"/>
<dbReference type="SMR" id="Q7YT37"/>
<dbReference type="ABCD" id="Q7YT37">
    <property type="antibodies" value="1 sequenced antibody"/>
</dbReference>
<dbReference type="EnsemblMetazoa" id="ASTE004273-RA">
    <property type="protein sequence ID" value="ASTE004273-PA"/>
    <property type="gene ID" value="ASTE004273"/>
</dbReference>
<dbReference type="VEuPathDB" id="VectorBase:ASTE004273"/>
<dbReference type="VEuPathDB" id="VectorBase:ASTEI11463"/>
<dbReference type="VEuPathDB" id="VectorBase:ASTEI20_044988"/>
<dbReference type="EvolutionaryTrace" id="Q7YT37"/>
<dbReference type="Proteomes" id="UP000076408">
    <property type="component" value="Unplaced"/>
</dbReference>
<dbReference type="GO" id="GO:0005576">
    <property type="term" value="C:extracellular region"/>
    <property type="evidence" value="ECO:0007669"/>
    <property type="project" value="UniProtKB-SubCell"/>
</dbReference>
<dbReference type="GO" id="GO:0019863">
    <property type="term" value="F:IgE binding"/>
    <property type="evidence" value="ECO:0007669"/>
    <property type="project" value="UniProtKB-KW"/>
</dbReference>
<dbReference type="GO" id="GO:0090729">
    <property type="term" value="F:toxin activity"/>
    <property type="evidence" value="ECO:0007669"/>
    <property type="project" value="UniProtKB-KW"/>
</dbReference>
<dbReference type="Gene3D" id="6.10.140.1890">
    <property type="match status" value="1"/>
</dbReference>
<dbReference type="InterPro" id="IPR017262">
    <property type="entry name" value="Aegyptin-like"/>
</dbReference>
<dbReference type="InterPro" id="IPR056799">
    <property type="entry name" value="ALL3/gSG7_salivary-like_helix"/>
</dbReference>
<dbReference type="Pfam" id="PF25001">
    <property type="entry name" value="Aegyptin_C"/>
    <property type="match status" value="1"/>
</dbReference>
<dbReference type="PIRSF" id="PIRSF037682">
    <property type="entry name" value="Salivary_gland_allergen_Aed3"/>
    <property type="match status" value="1"/>
</dbReference>
<reference evidence="17" key="1">
    <citation type="journal article" date="2003" name="Insect Biochem. Mol. Biol.">
        <title>Exploring the salivary gland transcriptome and proteome of the Anopheles stephensi mosquito.</title>
        <authorList>
            <person name="Valenzuela J.G."/>
            <person name="Francischetti I.M."/>
            <person name="Pham V.M."/>
            <person name="Garfield M.K."/>
            <person name="Ribeiro J.M."/>
        </authorList>
    </citation>
    <scope>NUCLEOTIDE SEQUENCE [LARGE SCALE MRNA]</scope>
</reference>
<reference evidence="18" key="2">
    <citation type="submission" date="2003-07" db="EMBL/GenBank/DDBJ databases">
        <title>Cloning of a gene encoding a major salivary gland protein of Anopheles stephensi.</title>
        <authorList>
            <person name="Yoshida S."/>
            <person name="Luo E."/>
            <person name="Matsuoka H."/>
        </authorList>
    </citation>
    <scope>NUCLEOTIDE SEQUENCE [MRNA]</scope>
    <source>
        <strain evidence="18">SDA 500</strain>
        <tissue evidence="18">Salivary gland</tissue>
    </source>
</reference>
<reference evidence="19" key="3">
    <citation type="journal article" date="2006" name="Insect Mol. Biol.">
        <title>Robust salivary gland-specific transgene expression in Anopheles stephensi mosquito.</title>
        <authorList>
            <person name="Yoshida S."/>
            <person name="Watanabe H."/>
        </authorList>
    </citation>
    <scope>NUCLEOTIDE SEQUENCE [GENOMIC DNA]</scope>
    <scope>TISSUE SPECIFICITY</scope>
    <scope>INDUCTION BY BLOOD FEEDING</scope>
    <source>
        <strain evidence="19">SDA 500</strain>
    </source>
</reference>
<reference evidence="16" key="4">
    <citation type="journal article" date="2008" name="Blood">
        <title>Inhibition of collagen-induced platelet aggregation by anopheline antiplatelet protein, a saliva protein from a malaria vector mosquito.</title>
        <authorList>
            <person name="Yoshida S."/>
            <person name="Sudo T."/>
            <person name="Niimi M."/>
            <person name="Tao L."/>
            <person name="Sun B."/>
            <person name="Kambayashi J."/>
            <person name="Watanabe H."/>
            <person name="Luo E."/>
            <person name="Matsuoka H."/>
        </authorList>
    </citation>
    <scope>FUNCTION</scope>
    <scope>TISSUE SPECIFICITY</scope>
    <source>
        <strain evidence="11">SDA 500</strain>
    </source>
</reference>
<reference evidence="16" key="5">
    <citation type="journal article" date="2012" name="Thromb. Res.">
        <title>Anopheline anti-platelet protein from a malaria vector mosquito has anti-thrombotic effects in vivo without compromising hemostasis.</title>
        <authorList>
            <person name="Hayashi H."/>
            <person name="Kyushiki H."/>
            <person name="Nagano K."/>
            <person name="Sudo T."/>
            <person name="Matsuoka H."/>
            <person name="Yoshida S."/>
        </authorList>
    </citation>
    <scope>FUNCTION</scope>
</reference>
<reference evidence="16" key="6">
    <citation type="journal article" date="2013" name="Platelets">
        <title>Identification of the active region responsible for the anti-thrombotic activity of anopheline anti-platelet protein from a malaria vector mosquito.</title>
        <authorList>
            <person name="Hayashi H."/>
            <person name="Kyushiki H."/>
            <person name="Nagano K."/>
            <person name="Sudo T."/>
            <person name="Iyori M."/>
            <person name="Matsuoka H."/>
            <person name="Yoshida S."/>
        </authorList>
    </citation>
    <scope>FUNCTION</scope>
    <scope>DOMAIN</scope>
</reference>
<reference evidence="16" key="7">
    <citation type="journal article" date="2019" name="Sci. Rep.">
        <title>Anopheline antiplatelet protein from mosquito saliva regulates blood feeding behavior.</title>
        <authorList>
            <person name="Islam A."/>
            <person name="Emran T.B."/>
            <person name="Yamamoto D.S."/>
            <person name="Iyori M."/>
            <person name="Amelia F."/>
            <person name="Yusuf Y."/>
            <person name="Yamaguchi R."/>
            <person name="Alam M.S."/>
            <person name="Silveira H."/>
            <person name="Yoshida S."/>
        </authorList>
    </citation>
    <scope>FUNCTION</scope>
    <scope>FUNCTION (MICROBIAL INFECTION)</scope>
    <scope>SUBCELLULAR LOCATION</scope>
    <scope>TISSUE SPECIFICITY</scope>
    <scope>DOMAIN</scope>
</reference>
<reference evidence="20" key="8">
    <citation type="journal article" date="2014" name="J. Biol. Chem.">
        <title>The crystal structure of the active domain of Anopheles anti-platelet protein, a powerful anti-coagulant, in complex with an antibody.</title>
        <authorList>
            <person name="Sugiyama K."/>
            <person name="Iyori M."/>
            <person name="Sawaguchi A."/>
            <person name="Akashi S."/>
            <person name="Tame J.R."/>
            <person name="Park S.Y."/>
            <person name="Yoshida S."/>
        </authorList>
    </citation>
    <scope>X-RAY CRYSTALLOGRAPHY (1.80 ANGSTROMS) OF 201-266 IN COMPLEX WITH AN ANTIBODY</scope>
    <scope>FUNCTION</scope>
    <scope>DISULFIDE BONDS</scope>
    <scope>MUTAGENESIS OF 232-LYS--ASN-235; CYS-239 AND CYS-261</scope>
</reference>